<keyword id="KW-0131">Cell cycle</keyword>
<keyword id="KW-0132">Cell division</keyword>
<keyword id="KW-0997">Cell inner membrane</keyword>
<keyword id="KW-1003">Cell membrane</keyword>
<keyword id="KW-0133">Cell shape</keyword>
<keyword id="KW-0961">Cell wall biogenesis/degradation</keyword>
<keyword id="KW-0328">Glycosyltransferase</keyword>
<keyword id="KW-0472">Membrane</keyword>
<keyword id="KW-0573">Peptidoglycan synthesis</keyword>
<keyword id="KW-0808">Transferase</keyword>
<gene>
    <name evidence="1" type="primary">murG</name>
    <name type="ordered locus">BamMC406_0488</name>
</gene>
<sequence length="367" mass="38577">MTASRRTLMVMAGGTGGHVFPGLAVAHRMEAAGWRVVWLGNPAGMEATLVPKHGIPMEYVRFGGLRGKGLKTKLTLPFNLLRACWQSLGALRRVRPDVVLGMGGYITFPAGVMAALSGRPLVLHEQNSIAGLANKVLAKFAKRVLVAFPGALPHAEWTGNPIRAELARTETPQARYASRSGPLNLLVVGGSLGAAALNEVVPRALALLAPGERPRVVHQAGAKHIDALKANYEAAGFAGGDAVRLVPFIDDMASAYAAADLVICRSGAMTVSEIAAVGVAALFVPFPYAVDDHQTTNAAFLADAGAAVLVQQRDLSAELLADWLRSQSRASLADMAERSRSLAKPEATDEVARICATVAGANLEEIK</sequence>
<protein>
    <recommendedName>
        <fullName evidence="1">UDP-N-acetylglucosamine--N-acetylmuramyl-(pentapeptide) pyrophosphoryl-undecaprenol N-acetylglucosamine transferase</fullName>
        <ecNumber evidence="1">2.4.1.227</ecNumber>
    </recommendedName>
    <alternativeName>
        <fullName evidence="1">Undecaprenyl-PP-MurNAc-pentapeptide-UDPGlcNAc GlcNAc transferase</fullName>
    </alternativeName>
</protein>
<proteinExistence type="inferred from homology"/>
<reference key="1">
    <citation type="submission" date="2008-04" db="EMBL/GenBank/DDBJ databases">
        <title>Complete sequence of chromosome 1 of Burkholderia ambifaria MC40-6.</title>
        <authorList>
            <person name="Copeland A."/>
            <person name="Lucas S."/>
            <person name="Lapidus A."/>
            <person name="Glavina del Rio T."/>
            <person name="Dalin E."/>
            <person name="Tice H."/>
            <person name="Pitluck S."/>
            <person name="Chain P."/>
            <person name="Malfatti S."/>
            <person name="Shin M."/>
            <person name="Vergez L."/>
            <person name="Lang D."/>
            <person name="Schmutz J."/>
            <person name="Larimer F."/>
            <person name="Land M."/>
            <person name="Hauser L."/>
            <person name="Kyrpides N."/>
            <person name="Lykidis A."/>
            <person name="Ramette A."/>
            <person name="Konstantinidis K."/>
            <person name="Tiedje J."/>
            <person name="Richardson P."/>
        </authorList>
    </citation>
    <scope>NUCLEOTIDE SEQUENCE [LARGE SCALE GENOMIC DNA]</scope>
    <source>
        <strain>MC40-6</strain>
    </source>
</reference>
<organism>
    <name type="scientific">Burkholderia ambifaria (strain MC40-6)</name>
    <dbReference type="NCBI Taxonomy" id="398577"/>
    <lineage>
        <taxon>Bacteria</taxon>
        <taxon>Pseudomonadati</taxon>
        <taxon>Pseudomonadota</taxon>
        <taxon>Betaproteobacteria</taxon>
        <taxon>Burkholderiales</taxon>
        <taxon>Burkholderiaceae</taxon>
        <taxon>Burkholderia</taxon>
        <taxon>Burkholderia cepacia complex</taxon>
    </lineage>
</organism>
<dbReference type="EC" id="2.4.1.227" evidence="1"/>
<dbReference type="EMBL" id="CP001025">
    <property type="protein sequence ID" value="ACB62985.1"/>
    <property type="molecule type" value="Genomic_DNA"/>
</dbReference>
<dbReference type="RefSeq" id="WP_011655892.1">
    <property type="nucleotide sequence ID" value="NC_010551.1"/>
</dbReference>
<dbReference type="SMR" id="B1YSS4"/>
<dbReference type="CAZy" id="GT28">
    <property type="family name" value="Glycosyltransferase Family 28"/>
</dbReference>
<dbReference type="GeneID" id="93084120"/>
<dbReference type="KEGG" id="bac:BamMC406_0488"/>
<dbReference type="HOGENOM" id="CLU_037404_2_0_4"/>
<dbReference type="OrthoDB" id="9808936at2"/>
<dbReference type="UniPathway" id="UPA00219"/>
<dbReference type="Proteomes" id="UP000001680">
    <property type="component" value="Chromosome 1"/>
</dbReference>
<dbReference type="GO" id="GO:0005886">
    <property type="term" value="C:plasma membrane"/>
    <property type="evidence" value="ECO:0007669"/>
    <property type="project" value="UniProtKB-SubCell"/>
</dbReference>
<dbReference type="GO" id="GO:0051991">
    <property type="term" value="F:UDP-N-acetyl-D-glucosamine:N-acetylmuramoyl-L-alanyl-D-glutamyl-meso-2,6-diaminopimelyl-D-alanyl-D-alanine-diphosphoundecaprenol 4-beta-N-acetylglucosaminlytransferase activity"/>
    <property type="evidence" value="ECO:0007669"/>
    <property type="project" value="RHEA"/>
</dbReference>
<dbReference type="GO" id="GO:0050511">
    <property type="term" value="F:undecaprenyldiphospho-muramoylpentapeptide beta-N-acetylglucosaminyltransferase activity"/>
    <property type="evidence" value="ECO:0007669"/>
    <property type="project" value="UniProtKB-UniRule"/>
</dbReference>
<dbReference type="GO" id="GO:0005975">
    <property type="term" value="P:carbohydrate metabolic process"/>
    <property type="evidence" value="ECO:0007669"/>
    <property type="project" value="InterPro"/>
</dbReference>
<dbReference type="GO" id="GO:0051301">
    <property type="term" value="P:cell division"/>
    <property type="evidence" value="ECO:0007669"/>
    <property type="project" value="UniProtKB-KW"/>
</dbReference>
<dbReference type="GO" id="GO:0071555">
    <property type="term" value="P:cell wall organization"/>
    <property type="evidence" value="ECO:0007669"/>
    <property type="project" value="UniProtKB-KW"/>
</dbReference>
<dbReference type="GO" id="GO:0030259">
    <property type="term" value="P:lipid glycosylation"/>
    <property type="evidence" value="ECO:0007669"/>
    <property type="project" value="UniProtKB-UniRule"/>
</dbReference>
<dbReference type="GO" id="GO:0009252">
    <property type="term" value="P:peptidoglycan biosynthetic process"/>
    <property type="evidence" value="ECO:0007669"/>
    <property type="project" value="UniProtKB-UniRule"/>
</dbReference>
<dbReference type="GO" id="GO:0008360">
    <property type="term" value="P:regulation of cell shape"/>
    <property type="evidence" value="ECO:0007669"/>
    <property type="project" value="UniProtKB-KW"/>
</dbReference>
<dbReference type="CDD" id="cd03785">
    <property type="entry name" value="GT28_MurG"/>
    <property type="match status" value="1"/>
</dbReference>
<dbReference type="Gene3D" id="3.40.50.2000">
    <property type="entry name" value="Glycogen Phosphorylase B"/>
    <property type="match status" value="2"/>
</dbReference>
<dbReference type="HAMAP" id="MF_00033">
    <property type="entry name" value="MurG"/>
    <property type="match status" value="1"/>
</dbReference>
<dbReference type="InterPro" id="IPR006009">
    <property type="entry name" value="GlcNAc_MurG"/>
</dbReference>
<dbReference type="InterPro" id="IPR007235">
    <property type="entry name" value="Glyco_trans_28_C"/>
</dbReference>
<dbReference type="InterPro" id="IPR004276">
    <property type="entry name" value="GlycoTrans_28_N"/>
</dbReference>
<dbReference type="NCBIfam" id="TIGR01133">
    <property type="entry name" value="murG"/>
    <property type="match status" value="1"/>
</dbReference>
<dbReference type="PANTHER" id="PTHR21015:SF22">
    <property type="entry name" value="GLYCOSYLTRANSFERASE"/>
    <property type="match status" value="1"/>
</dbReference>
<dbReference type="PANTHER" id="PTHR21015">
    <property type="entry name" value="UDP-N-ACETYLGLUCOSAMINE--N-ACETYLMURAMYL-(PENTAPEPTIDE) PYROPHOSPHORYL-UNDECAPRENOL N-ACETYLGLUCOSAMINE TRANSFERASE 1"/>
    <property type="match status" value="1"/>
</dbReference>
<dbReference type="Pfam" id="PF04101">
    <property type="entry name" value="Glyco_tran_28_C"/>
    <property type="match status" value="1"/>
</dbReference>
<dbReference type="Pfam" id="PF03033">
    <property type="entry name" value="Glyco_transf_28"/>
    <property type="match status" value="1"/>
</dbReference>
<dbReference type="SUPFAM" id="SSF53756">
    <property type="entry name" value="UDP-Glycosyltransferase/glycogen phosphorylase"/>
    <property type="match status" value="1"/>
</dbReference>
<name>MURG_BURA4</name>
<accession>B1YSS4</accession>
<feature type="chain" id="PRO_1000090409" description="UDP-N-acetylglucosamine--N-acetylmuramyl-(pentapeptide) pyrophosphoryl-undecaprenol N-acetylglucosamine transferase">
    <location>
        <begin position="1"/>
        <end position="367"/>
    </location>
</feature>
<feature type="binding site" evidence="1">
    <location>
        <begin position="15"/>
        <end position="17"/>
    </location>
    <ligand>
        <name>UDP-N-acetyl-alpha-D-glucosamine</name>
        <dbReference type="ChEBI" id="CHEBI:57705"/>
    </ligand>
</feature>
<feature type="binding site" evidence="1">
    <location>
        <position position="127"/>
    </location>
    <ligand>
        <name>UDP-N-acetyl-alpha-D-glucosamine</name>
        <dbReference type="ChEBI" id="CHEBI:57705"/>
    </ligand>
</feature>
<feature type="binding site" evidence="1">
    <location>
        <position position="163"/>
    </location>
    <ligand>
        <name>UDP-N-acetyl-alpha-D-glucosamine</name>
        <dbReference type="ChEBI" id="CHEBI:57705"/>
    </ligand>
</feature>
<feature type="binding site" evidence="1">
    <location>
        <position position="191"/>
    </location>
    <ligand>
        <name>UDP-N-acetyl-alpha-D-glucosamine</name>
        <dbReference type="ChEBI" id="CHEBI:57705"/>
    </ligand>
</feature>
<feature type="binding site" evidence="1">
    <location>
        <position position="249"/>
    </location>
    <ligand>
        <name>UDP-N-acetyl-alpha-D-glucosamine</name>
        <dbReference type="ChEBI" id="CHEBI:57705"/>
    </ligand>
</feature>
<feature type="binding site" evidence="1">
    <location>
        <position position="294"/>
    </location>
    <ligand>
        <name>UDP-N-acetyl-alpha-D-glucosamine</name>
        <dbReference type="ChEBI" id="CHEBI:57705"/>
    </ligand>
</feature>
<comment type="function">
    <text evidence="1">Cell wall formation. Catalyzes the transfer of a GlcNAc subunit on undecaprenyl-pyrophosphoryl-MurNAc-pentapeptide (lipid intermediate I) to form undecaprenyl-pyrophosphoryl-MurNAc-(pentapeptide)GlcNAc (lipid intermediate II).</text>
</comment>
<comment type="catalytic activity">
    <reaction evidence="1">
        <text>di-trans,octa-cis-undecaprenyl diphospho-N-acetyl-alpha-D-muramoyl-L-alanyl-D-glutamyl-meso-2,6-diaminopimeloyl-D-alanyl-D-alanine + UDP-N-acetyl-alpha-D-glucosamine = di-trans,octa-cis-undecaprenyl diphospho-[N-acetyl-alpha-D-glucosaminyl-(1-&gt;4)]-N-acetyl-alpha-D-muramoyl-L-alanyl-D-glutamyl-meso-2,6-diaminopimeloyl-D-alanyl-D-alanine + UDP + H(+)</text>
        <dbReference type="Rhea" id="RHEA:31227"/>
        <dbReference type="ChEBI" id="CHEBI:15378"/>
        <dbReference type="ChEBI" id="CHEBI:57705"/>
        <dbReference type="ChEBI" id="CHEBI:58223"/>
        <dbReference type="ChEBI" id="CHEBI:61387"/>
        <dbReference type="ChEBI" id="CHEBI:61388"/>
        <dbReference type="EC" id="2.4.1.227"/>
    </reaction>
</comment>
<comment type="pathway">
    <text evidence="1">Cell wall biogenesis; peptidoglycan biosynthesis.</text>
</comment>
<comment type="subcellular location">
    <subcellularLocation>
        <location evidence="1">Cell inner membrane</location>
        <topology evidence="1">Peripheral membrane protein</topology>
        <orientation evidence="1">Cytoplasmic side</orientation>
    </subcellularLocation>
</comment>
<comment type="similarity">
    <text evidence="1">Belongs to the glycosyltransferase 28 family. MurG subfamily.</text>
</comment>
<evidence type="ECO:0000255" key="1">
    <source>
        <dbReference type="HAMAP-Rule" id="MF_00033"/>
    </source>
</evidence>